<reference key="1">
    <citation type="journal article" date="2003" name="PLoS Biol.">
        <title>The genome sequence of Caenorhabditis briggsae: a platform for comparative genomics.</title>
        <authorList>
            <person name="Stein L.D."/>
            <person name="Bao Z."/>
            <person name="Blasiar D."/>
            <person name="Blumenthal T."/>
            <person name="Brent M.R."/>
            <person name="Chen N."/>
            <person name="Chinwalla A."/>
            <person name="Clarke L."/>
            <person name="Clee C."/>
            <person name="Coghlan A."/>
            <person name="Coulson A."/>
            <person name="D'Eustachio P."/>
            <person name="Fitch D.H.A."/>
            <person name="Fulton L.A."/>
            <person name="Fulton R.E."/>
            <person name="Griffiths-Jones S."/>
            <person name="Harris T.W."/>
            <person name="Hillier L.W."/>
            <person name="Kamath R."/>
            <person name="Kuwabara P.E."/>
            <person name="Mardis E.R."/>
            <person name="Marra M.A."/>
            <person name="Miner T.L."/>
            <person name="Minx P."/>
            <person name="Mullikin J.C."/>
            <person name="Plumb R.W."/>
            <person name="Rogers J."/>
            <person name="Schein J.E."/>
            <person name="Sohrmann M."/>
            <person name="Spieth J."/>
            <person name="Stajich J.E."/>
            <person name="Wei C."/>
            <person name="Willey D."/>
            <person name="Wilson R.K."/>
            <person name="Durbin R.M."/>
            <person name="Waterston R.H."/>
        </authorList>
    </citation>
    <scope>NUCLEOTIDE SEQUENCE [LARGE SCALE GENOMIC DNA]</scope>
    <source>
        <strain>AF16</strain>
    </source>
</reference>
<keyword id="KW-0007">Acetylation</keyword>
<keyword id="KW-0963">Cytoplasm</keyword>
<keyword id="KW-1185">Reference proteome</keyword>
<keyword id="KW-0687">Ribonucleoprotein</keyword>
<keyword id="KW-0689">Ribosomal protein</keyword>
<proteinExistence type="inferred from homology"/>
<sequence length="278" mass="30859">MSSGAAHSALTEEDVMKLLATQAHLGSTNLNFQMQQYVYKRRFDGPNIINVKKTWEKLLLAARAIAAVENPADVVVVSARPYAQRALLKFAAHTGATAIFGRFSPGCLTNQIQKTFKEPRLLVISDPRIDHQAVTEASYVGVPVISFVNTESPLKLIDIGVPCNNKGERSIGLMWWMLAREILILRGKISRQTGFVLDGKEIMPDLYFYRDPTETEKEETGAHAEVAETQEFQQQPDIDFTAQGGKVEDWAAETATWTNEGKTAADEWATGAQTQSNW</sequence>
<comment type="function">
    <text evidence="1">Required for the assembly and/or stability of the 40S ribosomal subunit. Required for the processing of the 20S rRNA-precursor to mature 18S rRNA in a late step of the maturation of 40S ribosomal subunits.</text>
</comment>
<comment type="subunit">
    <text evidence="1">Component of the small ribosomal subunit. Mature ribosomes consist of a small (40S) and a large (60S) subunit. The 40S subunit contains about 33 different proteins and 1 molecule of RNA (18S). The 60S subunit contains about 49 different proteins and 3 molecules of RNA (28S, 5.8S and 5S). Interacts with rps-21.</text>
</comment>
<comment type="subcellular location">
    <subcellularLocation>
        <location evidence="1">Cytoplasm</location>
    </subcellularLocation>
</comment>
<comment type="similarity">
    <text evidence="1">Belongs to the universal ribosomal protein uS2 family.</text>
</comment>
<dbReference type="EMBL" id="HE600963">
    <property type="protein sequence ID" value="CAP35523.1"/>
    <property type="molecule type" value="Genomic_DNA"/>
</dbReference>
<dbReference type="SMR" id="A8XSS1"/>
<dbReference type="FunCoup" id="A8XSS1">
    <property type="interactions" value="1890"/>
</dbReference>
<dbReference type="STRING" id="6238.A8XSS1"/>
<dbReference type="EnsemblMetazoa" id="CBG17994.1">
    <property type="protein sequence ID" value="CBG17994.1"/>
    <property type="gene ID" value="WBGene00037493"/>
</dbReference>
<dbReference type="KEGG" id="cbr:CBG_17994"/>
<dbReference type="CTD" id="8584050"/>
<dbReference type="WormBase" id="CBG17994">
    <property type="protein sequence ID" value="CBP10839"/>
    <property type="gene ID" value="WBGene00037493"/>
    <property type="gene designation" value="Cbr-rps-0"/>
</dbReference>
<dbReference type="eggNOG" id="KOG0830">
    <property type="taxonomic scope" value="Eukaryota"/>
</dbReference>
<dbReference type="HOGENOM" id="CLU_058171_1_0_1"/>
<dbReference type="InParanoid" id="A8XSS1"/>
<dbReference type="OMA" id="QCHLGAK"/>
<dbReference type="OrthoDB" id="414863at2759"/>
<dbReference type="Proteomes" id="UP000008549">
    <property type="component" value="Unassembled WGS sequence"/>
</dbReference>
<dbReference type="GO" id="GO:0022627">
    <property type="term" value="C:cytosolic small ribosomal subunit"/>
    <property type="evidence" value="ECO:0000318"/>
    <property type="project" value="GO_Central"/>
</dbReference>
<dbReference type="GO" id="GO:0003735">
    <property type="term" value="F:structural constituent of ribosome"/>
    <property type="evidence" value="ECO:0000318"/>
    <property type="project" value="GO_Central"/>
</dbReference>
<dbReference type="GO" id="GO:0002181">
    <property type="term" value="P:cytoplasmic translation"/>
    <property type="evidence" value="ECO:0000318"/>
    <property type="project" value="GO_Central"/>
</dbReference>
<dbReference type="GO" id="GO:0000028">
    <property type="term" value="P:ribosomal small subunit assembly"/>
    <property type="evidence" value="ECO:0000318"/>
    <property type="project" value="GO_Central"/>
</dbReference>
<dbReference type="CDD" id="cd01425">
    <property type="entry name" value="RPS2"/>
    <property type="match status" value="1"/>
</dbReference>
<dbReference type="FunFam" id="3.40.50.10490:FF:000012">
    <property type="entry name" value="40S ribosomal protein SA"/>
    <property type="match status" value="1"/>
</dbReference>
<dbReference type="Gene3D" id="3.40.50.10490">
    <property type="entry name" value="Glucose-6-phosphate isomerase like protein, domain 1"/>
    <property type="match status" value="1"/>
</dbReference>
<dbReference type="HAMAP" id="MF_03015">
    <property type="entry name" value="Ribosomal_S2_euk"/>
    <property type="match status" value="1"/>
</dbReference>
<dbReference type="InterPro" id="IPR001865">
    <property type="entry name" value="Ribosomal_uS2"/>
</dbReference>
<dbReference type="InterPro" id="IPR018130">
    <property type="entry name" value="Ribosomal_uS2_CS"/>
</dbReference>
<dbReference type="InterPro" id="IPR027498">
    <property type="entry name" value="Ribosomal_uS2_euk"/>
</dbReference>
<dbReference type="InterPro" id="IPR005707">
    <property type="entry name" value="Ribosomal_uS2_euk/arc"/>
</dbReference>
<dbReference type="InterPro" id="IPR023591">
    <property type="entry name" value="Ribosomal_uS2_flav_dom_sf"/>
</dbReference>
<dbReference type="NCBIfam" id="TIGR01012">
    <property type="entry name" value="uS2_euk_arch"/>
    <property type="match status" value="1"/>
</dbReference>
<dbReference type="PANTHER" id="PTHR11489">
    <property type="entry name" value="40S RIBOSOMAL PROTEIN SA"/>
    <property type="match status" value="1"/>
</dbReference>
<dbReference type="Pfam" id="PF00318">
    <property type="entry name" value="Ribosomal_S2"/>
    <property type="match status" value="1"/>
</dbReference>
<dbReference type="PRINTS" id="PR00395">
    <property type="entry name" value="RIBOSOMALS2"/>
</dbReference>
<dbReference type="SUPFAM" id="SSF52313">
    <property type="entry name" value="Ribosomal protein S2"/>
    <property type="match status" value="1"/>
</dbReference>
<dbReference type="PROSITE" id="PS00962">
    <property type="entry name" value="RIBOSOMAL_S2_1"/>
    <property type="match status" value="1"/>
</dbReference>
<dbReference type="PROSITE" id="PS00963">
    <property type="entry name" value="RIBOSOMAL_S2_2"/>
    <property type="match status" value="1"/>
</dbReference>
<protein>
    <recommendedName>
        <fullName evidence="1">Small ribosomal subunit protein uS2</fullName>
    </recommendedName>
    <alternativeName>
        <fullName evidence="3">40S ribosomal protein SA</fullName>
    </alternativeName>
</protein>
<name>RSSA_CAEBR</name>
<organism>
    <name type="scientific">Caenorhabditis briggsae</name>
    <dbReference type="NCBI Taxonomy" id="6238"/>
    <lineage>
        <taxon>Eukaryota</taxon>
        <taxon>Metazoa</taxon>
        <taxon>Ecdysozoa</taxon>
        <taxon>Nematoda</taxon>
        <taxon>Chromadorea</taxon>
        <taxon>Rhabditida</taxon>
        <taxon>Rhabditina</taxon>
        <taxon>Rhabditomorpha</taxon>
        <taxon>Rhabditoidea</taxon>
        <taxon>Rhabditidae</taxon>
        <taxon>Peloderinae</taxon>
        <taxon>Caenorhabditis</taxon>
    </lineage>
</organism>
<feature type="initiator methionine" description="Removed" evidence="1">
    <location>
        <position position="1"/>
    </location>
</feature>
<feature type="chain" id="PRO_0000371598" description="Small ribosomal subunit protein uS2">
    <location>
        <begin position="2"/>
        <end position="278"/>
    </location>
</feature>
<feature type="region of interest" description="Disordered" evidence="2">
    <location>
        <begin position="258"/>
        <end position="278"/>
    </location>
</feature>
<feature type="modified residue" description="N-acetylserine" evidence="1">
    <location>
        <position position="2"/>
    </location>
</feature>
<gene>
    <name evidence="1" type="primary">rps-0</name>
    <name type="ORF">CBG17994</name>
</gene>
<evidence type="ECO:0000255" key="1">
    <source>
        <dbReference type="HAMAP-Rule" id="MF_03015"/>
    </source>
</evidence>
<evidence type="ECO:0000256" key="2">
    <source>
        <dbReference type="SAM" id="MobiDB-lite"/>
    </source>
</evidence>
<evidence type="ECO:0000305" key="3"/>
<accession>A8XSS1</accession>